<feature type="chain" id="PRO_1000131106" description="UPF0246 protein Bphyt_1375">
    <location>
        <begin position="1"/>
        <end position="260"/>
    </location>
</feature>
<name>Y1375_PARPJ</name>
<sequence length="260" mass="29455">MIIVLSPAKSLDYETPPHVRKHTIPDFVDDAAELIGGLRRLSPQQIASLMDISDQLAHLNFQRYAEWSPKFGTHNAKQAVLAFNGDVYEGFNAKTLSSADLDYAQNHVRVLSGLYGLLRPLDLLQPYRLEMGTRFANPRGKDLYAFWGERITQALNAQLKKNAVASRVLVNCASGEYFKSVKPKLLEAPIITPVFEDWKGGRYKIISFHAKRARGLMARYAVENRIDRPEQLKDFDADGYAFDAEASNDSTYVFRRRVVE</sequence>
<dbReference type="EMBL" id="CP001052">
    <property type="protein sequence ID" value="ACD15790.1"/>
    <property type="molecule type" value="Genomic_DNA"/>
</dbReference>
<dbReference type="RefSeq" id="WP_012432406.1">
    <property type="nucleotide sequence ID" value="NC_010681.1"/>
</dbReference>
<dbReference type="SMR" id="B2T2H9"/>
<dbReference type="STRING" id="398527.Bphyt_1375"/>
<dbReference type="KEGG" id="bpy:Bphyt_1375"/>
<dbReference type="eggNOG" id="COG3022">
    <property type="taxonomic scope" value="Bacteria"/>
</dbReference>
<dbReference type="HOGENOM" id="CLU_061989_0_0_4"/>
<dbReference type="OrthoDB" id="9777133at2"/>
<dbReference type="Proteomes" id="UP000001739">
    <property type="component" value="Chromosome 1"/>
</dbReference>
<dbReference type="GO" id="GO:0005829">
    <property type="term" value="C:cytosol"/>
    <property type="evidence" value="ECO:0007669"/>
    <property type="project" value="TreeGrafter"/>
</dbReference>
<dbReference type="GO" id="GO:0033194">
    <property type="term" value="P:response to hydroperoxide"/>
    <property type="evidence" value="ECO:0007669"/>
    <property type="project" value="TreeGrafter"/>
</dbReference>
<dbReference type="HAMAP" id="MF_00652">
    <property type="entry name" value="UPF0246"/>
    <property type="match status" value="1"/>
</dbReference>
<dbReference type="InterPro" id="IPR005583">
    <property type="entry name" value="YaaA"/>
</dbReference>
<dbReference type="NCBIfam" id="NF002541">
    <property type="entry name" value="PRK02101.1-1"/>
    <property type="match status" value="1"/>
</dbReference>
<dbReference type="NCBIfam" id="NF002542">
    <property type="entry name" value="PRK02101.1-3"/>
    <property type="match status" value="1"/>
</dbReference>
<dbReference type="PANTHER" id="PTHR30283:SF4">
    <property type="entry name" value="PEROXIDE STRESS RESISTANCE PROTEIN YAAA"/>
    <property type="match status" value="1"/>
</dbReference>
<dbReference type="PANTHER" id="PTHR30283">
    <property type="entry name" value="PEROXIDE STRESS RESPONSE PROTEIN YAAA"/>
    <property type="match status" value="1"/>
</dbReference>
<dbReference type="Pfam" id="PF03883">
    <property type="entry name" value="H2O2_YaaD"/>
    <property type="match status" value="1"/>
</dbReference>
<reference key="1">
    <citation type="journal article" date="2011" name="J. Bacteriol.">
        <title>Complete genome sequence of the plant growth-promoting endophyte Burkholderia phytofirmans strain PsJN.</title>
        <authorList>
            <person name="Weilharter A."/>
            <person name="Mitter B."/>
            <person name="Shin M.V."/>
            <person name="Chain P.S."/>
            <person name="Nowak J."/>
            <person name="Sessitsch A."/>
        </authorList>
    </citation>
    <scope>NUCLEOTIDE SEQUENCE [LARGE SCALE GENOMIC DNA]</scope>
    <source>
        <strain>DSM 17436 / LMG 22146 / PsJN</strain>
    </source>
</reference>
<gene>
    <name type="ordered locus">Bphyt_1375</name>
</gene>
<evidence type="ECO:0000255" key="1">
    <source>
        <dbReference type="HAMAP-Rule" id="MF_00652"/>
    </source>
</evidence>
<protein>
    <recommendedName>
        <fullName evidence="1">UPF0246 protein Bphyt_1375</fullName>
    </recommendedName>
</protein>
<comment type="similarity">
    <text evidence="1">Belongs to the UPF0246 family.</text>
</comment>
<accession>B2T2H9</accession>
<organism>
    <name type="scientific">Paraburkholderia phytofirmans (strain DSM 17436 / LMG 22146 / PsJN)</name>
    <name type="common">Burkholderia phytofirmans</name>
    <dbReference type="NCBI Taxonomy" id="398527"/>
    <lineage>
        <taxon>Bacteria</taxon>
        <taxon>Pseudomonadati</taxon>
        <taxon>Pseudomonadota</taxon>
        <taxon>Betaproteobacteria</taxon>
        <taxon>Burkholderiales</taxon>
        <taxon>Burkholderiaceae</taxon>
        <taxon>Paraburkholderia</taxon>
    </lineage>
</organism>
<proteinExistence type="inferred from homology"/>